<sequence length="301" mass="34619">MTFSQIILTLQKYWNEQGCIIVQPYDMPAGAGTYHWATFLRSLGKKPWKAAYVAPSRRPTDGRYGENPNRLGAYYQFQVILKPSPDNIQELYLKSLEILGLDIKNHDIRFVEDNWESPTLGAWGLGWEVWLDGMEITQFTYFQQVGGIPCELISGEITYGLERLAMYLQDIDNVYDIVWDDNGGHKVLYGDVHKQSEFEFSKYNFELADTKMLFTQFDNCFKECKRILEQKYIKDGVELDGLALPAYDYCMLAAHTFNVLDARGAISVTQRQDYILKIRELAKGCALAYSKNSAQISSKKR</sequence>
<proteinExistence type="inferred from homology"/>
<evidence type="ECO:0000255" key="1">
    <source>
        <dbReference type="HAMAP-Rule" id="MF_00254"/>
    </source>
</evidence>
<protein>
    <recommendedName>
        <fullName evidence="1">Glycine--tRNA ligase alpha subunit</fullName>
        <ecNumber evidence="1">6.1.1.14</ecNumber>
    </recommendedName>
    <alternativeName>
        <fullName evidence="1">Glycyl-tRNA synthetase alpha subunit</fullName>
        <shortName evidence="1">GlyRS</shortName>
    </alternativeName>
</protein>
<gene>
    <name evidence="1" type="primary">glyQ</name>
    <name type="ordered locus">CHAB381_0708</name>
</gene>
<reference key="1">
    <citation type="submission" date="2007-07" db="EMBL/GenBank/DDBJ databases">
        <title>Complete genome sequence of Campylobacter hominis ATCC BAA-381, a commensal isolated from the human gastrointestinal tract.</title>
        <authorList>
            <person name="Fouts D.E."/>
            <person name="Mongodin E.F."/>
            <person name="Puiu D."/>
            <person name="Sebastian Y."/>
            <person name="Miller W.G."/>
            <person name="Mandrell R.E."/>
            <person name="Nelson K.E."/>
        </authorList>
    </citation>
    <scope>NUCLEOTIDE SEQUENCE [LARGE SCALE GENOMIC DNA]</scope>
    <source>
        <strain>ATCC BAA-381 / DSM 21671 / CCUG 45161 / LMG 19568 / NCTC 13146 / CH001A</strain>
    </source>
</reference>
<keyword id="KW-0030">Aminoacyl-tRNA synthetase</keyword>
<keyword id="KW-0067">ATP-binding</keyword>
<keyword id="KW-0963">Cytoplasm</keyword>
<keyword id="KW-0436">Ligase</keyword>
<keyword id="KW-0547">Nucleotide-binding</keyword>
<keyword id="KW-0648">Protein biosynthesis</keyword>
<keyword id="KW-1185">Reference proteome</keyword>
<accession>A7I198</accession>
<dbReference type="EC" id="6.1.1.14" evidence="1"/>
<dbReference type="EMBL" id="CP000776">
    <property type="protein sequence ID" value="ABS51313.1"/>
    <property type="molecule type" value="Genomic_DNA"/>
</dbReference>
<dbReference type="RefSeq" id="WP_012108576.1">
    <property type="nucleotide sequence ID" value="NC_009714.1"/>
</dbReference>
<dbReference type="SMR" id="A7I198"/>
<dbReference type="STRING" id="360107.CHAB381_0708"/>
<dbReference type="KEGG" id="cha:CHAB381_0708"/>
<dbReference type="eggNOG" id="COG0752">
    <property type="taxonomic scope" value="Bacteria"/>
</dbReference>
<dbReference type="HOGENOM" id="CLU_057066_1_0_7"/>
<dbReference type="OrthoDB" id="9802183at2"/>
<dbReference type="Proteomes" id="UP000002407">
    <property type="component" value="Chromosome"/>
</dbReference>
<dbReference type="GO" id="GO:0005829">
    <property type="term" value="C:cytosol"/>
    <property type="evidence" value="ECO:0007669"/>
    <property type="project" value="TreeGrafter"/>
</dbReference>
<dbReference type="GO" id="GO:0005524">
    <property type="term" value="F:ATP binding"/>
    <property type="evidence" value="ECO:0007669"/>
    <property type="project" value="UniProtKB-UniRule"/>
</dbReference>
<dbReference type="GO" id="GO:0004820">
    <property type="term" value="F:glycine-tRNA ligase activity"/>
    <property type="evidence" value="ECO:0007669"/>
    <property type="project" value="UniProtKB-UniRule"/>
</dbReference>
<dbReference type="GO" id="GO:0006426">
    <property type="term" value="P:glycyl-tRNA aminoacylation"/>
    <property type="evidence" value="ECO:0007669"/>
    <property type="project" value="UniProtKB-UniRule"/>
</dbReference>
<dbReference type="CDD" id="cd00733">
    <property type="entry name" value="GlyRS_alpha_core"/>
    <property type="match status" value="1"/>
</dbReference>
<dbReference type="FunFam" id="3.30.930.10:FF:000006">
    <property type="entry name" value="Glycine--tRNA ligase alpha subunit"/>
    <property type="match status" value="1"/>
</dbReference>
<dbReference type="Gene3D" id="3.30.930.10">
    <property type="entry name" value="Bira Bifunctional Protein, Domain 2"/>
    <property type="match status" value="1"/>
</dbReference>
<dbReference type="Gene3D" id="1.20.58.180">
    <property type="entry name" value="Class II aaRS and biotin synthetases, domain 2"/>
    <property type="match status" value="1"/>
</dbReference>
<dbReference type="HAMAP" id="MF_00254">
    <property type="entry name" value="Gly_tRNA_synth_alpha"/>
    <property type="match status" value="1"/>
</dbReference>
<dbReference type="InterPro" id="IPR045864">
    <property type="entry name" value="aa-tRNA-synth_II/BPL/LPL"/>
</dbReference>
<dbReference type="InterPro" id="IPR006194">
    <property type="entry name" value="Gly-tRNA-synth_heterodimer"/>
</dbReference>
<dbReference type="InterPro" id="IPR002310">
    <property type="entry name" value="Gly-tRNA_ligase_asu"/>
</dbReference>
<dbReference type="NCBIfam" id="TIGR00388">
    <property type="entry name" value="glyQ"/>
    <property type="match status" value="1"/>
</dbReference>
<dbReference type="NCBIfam" id="NF006827">
    <property type="entry name" value="PRK09348.1"/>
    <property type="match status" value="1"/>
</dbReference>
<dbReference type="PANTHER" id="PTHR30075:SF2">
    <property type="entry name" value="GLYCINE--TRNA LIGASE, CHLOROPLASTIC_MITOCHONDRIAL 2"/>
    <property type="match status" value="1"/>
</dbReference>
<dbReference type="PANTHER" id="PTHR30075">
    <property type="entry name" value="GLYCYL-TRNA SYNTHETASE"/>
    <property type="match status" value="1"/>
</dbReference>
<dbReference type="Pfam" id="PF02091">
    <property type="entry name" value="tRNA-synt_2e"/>
    <property type="match status" value="1"/>
</dbReference>
<dbReference type="PRINTS" id="PR01044">
    <property type="entry name" value="TRNASYNTHGA"/>
</dbReference>
<dbReference type="SUPFAM" id="SSF55681">
    <property type="entry name" value="Class II aaRS and biotin synthetases"/>
    <property type="match status" value="1"/>
</dbReference>
<dbReference type="PROSITE" id="PS50861">
    <property type="entry name" value="AA_TRNA_LIGASE_II_GLYAB"/>
    <property type="match status" value="1"/>
</dbReference>
<organism>
    <name type="scientific">Campylobacter hominis (strain ATCC BAA-381 / DSM 21671 / CCUG 45161 / LMG 19568 / NCTC 13146 / CH001A)</name>
    <dbReference type="NCBI Taxonomy" id="360107"/>
    <lineage>
        <taxon>Bacteria</taxon>
        <taxon>Pseudomonadati</taxon>
        <taxon>Campylobacterota</taxon>
        <taxon>Epsilonproteobacteria</taxon>
        <taxon>Campylobacterales</taxon>
        <taxon>Campylobacteraceae</taxon>
        <taxon>Campylobacter</taxon>
    </lineage>
</organism>
<feature type="chain" id="PRO_1000047407" description="Glycine--tRNA ligase alpha subunit">
    <location>
        <begin position="1"/>
        <end position="301"/>
    </location>
</feature>
<name>SYGA_CAMHC</name>
<comment type="catalytic activity">
    <reaction evidence="1">
        <text>tRNA(Gly) + glycine + ATP = glycyl-tRNA(Gly) + AMP + diphosphate</text>
        <dbReference type="Rhea" id="RHEA:16013"/>
        <dbReference type="Rhea" id="RHEA-COMP:9664"/>
        <dbReference type="Rhea" id="RHEA-COMP:9683"/>
        <dbReference type="ChEBI" id="CHEBI:30616"/>
        <dbReference type="ChEBI" id="CHEBI:33019"/>
        <dbReference type="ChEBI" id="CHEBI:57305"/>
        <dbReference type="ChEBI" id="CHEBI:78442"/>
        <dbReference type="ChEBI" id="CHEBI:78522"/>
        <dbReference type="ChEBI" id="CHEBI:456215"/>
        <dbReference type="EC" id="6.1.1.14"/>
    </reaction>
</comment>
<comment type="subunit">
    <text evidence="1">Tetramer of two alpha and two beta subunits.</text>
</comment>
<comment type="subcellular location">
    <subcellularLocation>
        <location evidence="1">Cytoplasm</location>
    </subcellularLocation>
</comment>
<comment type="similarity">
    <text evidence="1">Belongs to the class-II aminoacyl-tRNA synthetase family.</text>
</comment>